<name>RSMH_SHEB5</name>
<comment type="function">
    <text evidence="1">Specifically methylates the N4 position of cytidine in position 1402 (C1402) of 16S rRNA.</text>
</comment>
<comment type="catalytic activity">
    <reaction evidence="1">
        <text>cytidine(1402) in 16S rRNA + S-adenosyl-L-methionine = N(4)-methylcytidine(1402) in 16S rRNA + S-adenosyl-L-homocysteine + H(+)</text>
        <dbReference type="Rhea" id="RHEA:42928"/>
        <dbReference type="Rhea" id="RHEA-COMP:10286"/>
        <dbReference type="Rhea" id="RHEA-COMP:10287"/>
        <dbReference type="ChEBI" id="CHEBI:15378"/>
        <dbReference type="ChEBI" id="CHEBI:57856"/>
        <dbReference type="ChEBI" id="CHEBI:59789"/>
        <dbReference type="ChEBI" id="CHEBI:74506"/>
        <dbReference type="ChEBI" id="CHEBI:82748"/>
        <dbReference type="EC" id="2.1.1.199"/>
    </reaction>
</comment>
<comment type="subcellular location">
    <subcellularLocation>
        <location evidence="1">Cytoplasm</location>
    </subcellularLocation>
</comment>
<comment type="similarity">
    <text evidence="1">Belongs to the methyltransferase superfamily. RsmH family.</text>
</comment>
<dbReference type="EC" id="2.1.1.199" evidence="1"/>
<dbReference type="EMBL" id="CP000563">
    <property type="protein sequence ID" value="ABN59926.1"/>
    <property type="molecule type" value="Genomic_DNA"/>
</dbReference>
<dbReference type="RefSeq" id="WP_006079886.1">
    <property type="nucleotide sequence ID" value="NC_009052.1"/>
</dbReference>
<dbReference type="SMR" id="A3CZL3"/>
<dbReference type="STRING" id="325240.Sbal_0394"/>
<dbReference type="GeneID" id="11770743"/>
<dbReference type="KEGG" id="sbl:Sbal_0394"/>
<dbReference type="HOGENOM" id="CLU_038422_2_0_6"/>
<dbReference type="OrthoDB" id="9806637at2"/>
<dbReference type="Proteomes" id="UP000001557">
    <property type="component" value="Chromosome"/>
</dbReference>
<dbReference type="GO" id="GO:0005737">
    <property type="term" value="C:cytoplasm"/>
    <property type="evidence" value="ECO:0007669"/>
    <property type="project" value="UniProtKB-SubCell"/>
</dbReference>
<dbReference type="GO" id="GO:0071424">
    <property type="term" value="F:rRNA (cytosine-N4-)-methyltransferase activity"/>
    <property type="evidence" value="ECO:0007669"/>
    <property type="project" value="UniProtKB-UniRule"/>
</dbReference>
<dbReference type="GO" id="GO:0070475">
    <property type="term" value="P:rRNA base methylation"/>
    <property type="evidence" value="ECO:0007669"/>
    <property type="project" value="UniProtKB-UniRule"/>
</dbReference>
<dbReference type="FunFam" id="1.10.150.170:FF:000001">
    <property type="entry name" value="Ribosomal RNA small subunit methyltransferase H"/>
    <property type="match status" value="1"/>
</dbReference>
<dbReference type="Gene3D" id="1.10.150.170">
    <property type="entry name" value="Putative methyltransferase TM0872, insert domain"/>
    <property type="match status" value="1"/>
</dbReference>
<dbReference type="Gene3D" id="3.40.50.150">
    <property type="entry name" value="Vaccinia Virus protein VP39"/>
    <property type="match status" value="1"/>
</dbReference>
<dbReference type="HAMAP" id="MF_01007">
    <property type="entry name" value="16SrRNA_methyltr_H"/>
    <property type="match status" value="1"/>
</dbReference>
<dbReference type="InterPro" id="IPR002903">
    <property type="entry name" value="RsmH"/>
</dbReference>
<dbReference type="InterPro" id="IPR023397">
    <property type="entry name" value="SAM-dep_MeTrfase_MraW_recog"/>
</dbReference>
<dbReference type="InterPro" id="IPR029063">
    <property type="entry name" value="SAM-dependent_MTases_sf"/>
</dbReference>
<dbReference type="NCBIfam" id="TIGR00006">
    <property type="entry name" value="16S rRNA (cytosine(1402)-N(4))-methyltransferase RsmH"/>
    <property type="match status" value="1"/>
</dbReference>
<dbReference type="PANTHER" id="PTHR11265:SF0">
    <property type="entry name" value="12S RRNA N4-METHYLCYTIDINE METHYLTRANSFERASE"/>
    <property type="match status" value="1"/>
</dbReference>
<dbReference type="PANTHER" id="PTHR11265">
    <property type="entry name" value="S-ADENOSYL-METHYLTRANSFERASE MRAW"/>
    <property type="match status" value="1"/>
</dbReference>
<dbReference type="Pfam" id="PF01795">
    <property type="entry name" value="Methyltransf_5"/>
    <property type="match status" value="1"/>
</dbReference>
<dbReference type="PIRSF" id="PIRSF004486">
    <property type="entry name" value="MraW"/>
    <property type="match status" value="1"/>
</dbReference>
<dbReference type="SUPFAM" id="SSF81799">
    <property type="entry name" value="Putative methyltransferase TM0872, insert domain"/>
    <property type="match status" value="1"/>
</dbReference>
<dbReference type="SUPFAM" id="SSF53335">
    <property type="entry name" value="S-adenosyl-L-methionine-dependent methyltransferases"/>
    <property type="match status" value="1"/>
</dbReference>
<reference key="1">
    <citation type="submission" date="2007-02" db="EMBL/GenBank/DDBJ databases">
        <title>Complete sequence of chromosome of Shewanella baltica OS155.</title>
        <authorList>
            <consortium name="US DOE Joint Genome Institute"/>
            <person name="Copeland A."/>
            <person name="Lucas S."/>
            <person name="Lapidus A."/>
            <person name="Barry K."/>
            <person name="Detter J.C."/>
            <person name="Glavina del Rio T."/>
            <person name="Hammon N."/>
            <person name="Israni S."/>
            <person name="Dalin E."/>
            <person name="Tice H."/>
            <person name="Pitluck S."/>
            <person name="Sims D.R."/>
            <person name="Brettin T."/>
            <person name="Bruce D."/>
            <person name="Han C."/>
            <person name="Tapia R."/>
            <person name="Brainard J."/>
            <person name="Schmutz J."/>
            <person name="Larimer F."/>
            <person name="Land M."/>
            <person name="Hauser L."/>
            <person name="Kyrpides N."/>
            <person name="Mikhailova N."/>
            <person name="Brettar I."/>
            <person name="Klappenbach J."/>
            <person name="Konstantinidis K."/>
            <person name="Rodrigues J."/>
            <person name="Tiedje J."/>
            <person name="Richardson P."/>
        </authorList>
    </citation>
    <scope>NUCLEOTIDE SEQUENCE [LARGE SCALE GENOMIC DNA]</scope>
    <source>
        <strain>OS155 / ATCC BAA-1091</strain>
    </source>
</reference>
<keyword id="KW-0963">Cytoplasm</keyword>
<keyword id="KW-0489">Methyltransferase</keyword>
<keyword id="KW-1185">Reference proteome</keyword>
<keyword id="KW-0698">rRNA processing</keyword>
<keyword id="KW-0949">S-adenosyl-L-methionine</keyword>
<keyword id="KW-0808">Transferase</keyword>
<organism>
    <name type="scientific">Shewanella baltica (strain OS155 / ATCC BAA-1091)</name>
    <dbReference type="NCBI Taxonomy" id="325240"/>
    <lineage>
        <taxon>Bacteria</taxon>
        <taxon>Pseudomonadati</taxon>
        <taxon>Pseudomonadota</taxon>
        <taxon>Gammaproteobacteria</taxon>
        <taxon>Alteromonadales</taxon>
        <taxon>Shewanellaceae</taxon>
        <taxon>Shewanella</taxon>
    </lineage>
</organism>
<gene>
    <name evidence="1" type="primary">rsmH</name>
    <name type="synonym">mraW</name>
    <name type="ordered locus">Sbal_0394</name>
</gene>
<accession>A3CZL3</accession>
<evidence type="ECO:0000255" key="1">
    <source>
        <dbReference type="HAMAP-Rule" id="MF_01007"/>
    </source>
</evidence>
<protein>
    <recommendedName>
        <fullName evidence="1">Ribosomal RNA small subunit methyltransferase H</fullName>
        <ecNumber evidence="1">2.1.1.199</ecNumber>
    </recommendedName>
    <alternativeName>
        <fullName evidence="1">16S rRNA m(4)C1402 methyltransferase</fullName>
    </alternativeName>
    <alternativeName>
        <fullName evidence="1">rRNA (cytosine-N(4)-)-methyltransferase RsmH</fullName>
    </alternativeName>
</protein>
<sequence length="313" mass="35031">MSQEFAHLSVLLAETVGGLNIKDDGIYIDGTFGRGGHSRQVLQQLGENGRLIAIDRDPQAIEAAKQFADDPRFQIVHGGFGQLADYVEELGLVGKIDGVLLDLGVSSPQLDDAERGFSFMRDGPLDMRMDNSQGQTAAQWLARAEIEDMAWVFKTYGEEKNARHIARCIAADRDKTPFLRTKDLADLIARITKSKERNKHPATRVFQAIRIYINSELDQIDQALEGAVNVLAPQGRLSVISFHSLEDRIVKRFIRRHSQGESVPHGFPVTEDQINKSRKLRAVGKAIMPSDEEIERNARARSSVLRIAERLDY</sequence>
<feature type="chain" id="PRO_0000387110" description="Ribosomal RNA small subunit methyltransferase H">
    <location>
        <begin position="1"/>
        <end position="313"/>
    </location>
</feature>
<feature type="binding site" evidence="1">
    <location>
        <begin position="35"/>
        <end position="37"/>
    </location>
    <ligand>
        <name>S-adenosyl-L-methionine</name>
        <dbReference type="ChEBI" id="CHEBI:59789"/>
    </ligand>
</feature>
<feature type="binding site" evidence="1">
    <location>
        <position position="55"/>
    </location>
    <ligand>
        <name>S-adenosyl-L-methionine</name>
        <dbReference type="ChEBI" id="CHEBI:59789"/>
    </ligand>
</feature>
<feature type="binding site" evidence="1">
    <location>
        <position position="80"/>
    </location>
    <ligand>
        <name>S-adenosyl-L-methionine</name>
        <dbReference type="ChEBI" id="CHEBI:59789"/>
    </ligand>
</feature>
<feature type="binding site" evidence="1">
    <location>
        <position position="102"/>
    </location>
    <ligand>
        <name>S-adenosyl-L-methionine</name>
        <dbReference type="ChEBI" id="CHEBI:59789"/>
    </ligand>
</feature>
<feature type="binding site" evidence="1">
    <location>
        <position position="109"/>
    </location>
    <ligand>
        <name>S-adenosyl-L-methionine</name>
        <dbReference type="ChEBI" id="CHEBI:59789"/>
    </ligand>
</feature>
<proteinExistence type="inferred from homology"/>